<reference key="1">
    <citation type="journal article" date="2009" name="PLoS Genet.">
        <title>Organised genome dynamics in the Escherichia coli species results in highly diverse adaptive paths.</title>
        <authorList>
            <person name="Touchon M."/>
            <person name="Hoede C."/>
            <person name="Tenaillon O."/>
            <person name="Barbe V."/>
            <person name="Baeriswyl S."/>
            <person name="Bidet P."/>
            <person name="Bingen E."/>
            <person name="Bonacorsi S."/>
            <person name="Bouchier C."/>
            <person name="Bouvet O."/>
            <person name="Calteau A."/>
            <person name="Chiapello H."/>
            <person name="Clermont O."/>
            <person name="Cruveiller S."/>
            <person name="Danchin A."/>
            <person name="Diard M."/>
            <person name="Dossat C."/>
            <person name="Karoui M.E."/>
            <person name="Frapy E."/>
            <person name="Garry L."/>
            <person name="Ghigo J.M."/>
            <person name="Gilles A.M."/>
            <person name="Johnson J."/>
            <person name="Le Bouguenec C."/>
            <person name="Lescat M."/>
            <person name="Mangenot S."/>
            <person name="Martinez-Jehanne V."/>
            <person name="Matic I."/>
            <person name="Nassif X."/>
            <person name="Oztas S."/>
            <person name="Petit M.A."/>
            <person name="Pichon C."/>
            <person name="Rouy Z."/>
            <person name="Ruf C.S."/>
            <person name="Schneider D."/>
            <person name="Tourret J."/>
            <person name="Vacherie B."/>
            <person name="Vallenet D."/>
            <person name="Medigue C."/>
            <person name="Rocha E.P.C."/>
            <person name="Denamur E."/>
        </authorList>
    </citation>
    <scope>NUCLEOTIDE SEQUENCE [LARGE SCALE GENOMIC DNA]</scope>
    <source>
        <strain>UMN026 / ExPEC</strain>
    </source>
</reference>
<gene>
    <name evidence="1" type="primary">nfo</name>
    <name type="ordered locus">ECUMN_2495</name>
</gene>
<name>END4_ECOLU</name>
<protein>
    <recommendedName>
        <fullName evidence="1">Probable endonuclease 4</fullName>
        <ecNumber evidence="1">3.1.21.2</ecNumber>
    </recommendedName>
    <alternativeName>
        <fullName evidence="1">Endodeoxyribonuclease IV</fullName>
    </alternativeName>
    <alternativeName>
        <fullName evidence="1">Endonuclease IV</fullName>
    </alternativeName>
</protein>
<organism>
    <name type="scientific">Escherichia coli O17:K52:H18 (strain UMN026 / ExPEC)</name>
    <dbReference type="NCBI Taxonomy" id="585056"/>
    <lineage>
        <taxon>Bacteria</taxon>
        <taxon>Pseudomonadati</taxon>
        <taxon>Pseudomonadota</taxon>
        <taxon>Gammaproteobacteria</taxon>
        <taxon>Enterobacterales</taxon>
        <taxon>Enterobacteriaceae</taxon>
        <taxon>Escherichia</taxon>
    </lineage>
</organism>
<evidence type="ECO:0000255" key="1">
    <source>
        <dbReference type="HAMAP-Rule" id="MF_00152"/>
    </source>
</evidence>
<feature type="chain" id="PRO_1000118096" description="Probable endonuclease 4">
    <location>
        <begin position="1"/>
        <end position="285"/>
    </location>
</feature>
<feature type="binding site" evidence="1">
    <location>
        <position position="69"/>
    </location>
    <ligand>
        <name>Zn(2+)</name>
        <dbReference type="ChEBI" id="CHEBI:29105"/>
        <label>1</label>
    </ligand>
</feature>
<feature type="binding site" evidence="1">
    <location>
        <position position="109"/>
    </location>
    <ligand>
        <name>Zn(2+)</name>
        <dbReference type="ChEBI" id="CHEBI:29105"/>
        <label>1</label>
    </ligand>
</feature>
<feature type="binding site" evidence="1">
    <location>
        <position position="145"/>
    </location>
    <ligand>
        <name>Zn(2+)</name>
        <dbReference type="ChEBI" id="CHEBI:29105"/>
        <label>1</label>
    </ligand>
</feature>
<feature type="binding site" evidence="1">
    <location>
        <position position="145"/>
    </location>
    <ligand>
        <name>Zn(2+)</name>
        <dbReference type="ChEBI" id="CHEBI:29105"/>
        <label>2</label>
    </ligand>
</feature>
<feature type="binding site" evidence="1">
    <location>
        <position position="179"/>
    </location>
    <ligand>
        <name>Zn(2+)</name>
        <dbReference type="ChEBI" id="CHEBI:29105"/>
        <label>2</label>
    </ligand>
</feature>
<feature type="binding site" evidence="1">
    <location>
        <position position="182"/>
    </location>
    <ligand>
        <name>Zn(2+)</name>
        <dbReference type="ChEBI" id="CHEBI:29105"/>
        <label>3</label>
    </ligand>
</feature>
<feature type="binding site" evidence="1">
    <location>
        <position position="216"/>
    </location>
    <ligand>
        <name>Zn(2+)</name>
        <dbReference type="ChEBI" id="CHEBI:29105"/>
        <label>2</label>
    </ligand>
</feature>
<feature type="binding site" evidence="1">
    <location>
        <position position="229"/>
    </location>
    <ligand>
        <name>Zn(2+)</name>
        <dbReference type="ChEBI" id="CHEBI:29105"/>
        <label>3</label>
    </ligand>
</feature>
<feature type="binding site" evidence="1">
    <location>
        <position position="231"/>
    </location>
    <ligand>
        <name>Zn(2+)</name>
        <dbReference type="ChEBI" id="CHEBI:29105"/>
        <label>3</label>
    </ligand>
</feature>
<feature type="binding site" evidence="1">
    <location>
        <position position="261"/>
    </location>
    <ligand>
        <name>Zn(2+)</name>
        <dbReference type="ChEBI" id="CHEBI:29105"/>
        <label>2</label>
    </ligand>
</feature>
<accession>B7N5C2</accession>
<comment type="function">
    <text evidence="1">Endonuclease IV plays a role in DNA repair. It cleaves phosphodiester bonds at apurinic or apyrimidinic (AP) sites, generating a 3'-hydroxyl group and a 5'-terminal sugar phosphate.</text>
</comment>
<comment type="catalytic activity">
    <reaction evidence="1">
        <text>Endonucleolytic cleavage to 5'-phosphooligonucleotide end-products.</text>
        <dbReference type="EC" id="3.1.21.2"/>
    </reaction>
</comment>
<comment type="cofactor">
    <cofactor evidence="1">
        <name>Zn(2+)</name>
        <dbReference type="ChEBI" id="CHEBI:29105"/>
    </cofactor>
    <text evidence="1">Binds 3 Zn(2+) ions.</text>
</comment>
<comment type="similarity">
    <text evidence="1">Belongs to the AP endonuclease 2 family.</text>
</comment>
<keyword id="KW-0227">DNA damage</keyword>
<keyword id="KW-0234">DNA repair</keyword>
<keyword id="KW-0255">Endonuclease</keyword>
<keyword id="KW-0378">Hydrolase</keyword>
<keyword id="KW-0479">Metal-binding</keyword>
<keyword id="KW-0540">Nuclease</keyword>
<keyword id="KW-0862">Zinc</keyword>
<sequence>MKYIGAHVSAAGGLANAAIRAAEIDATAFALFTKNQRQWRAAPLTTQTIDEFKAACEKYHYTSAQILPHDSYLINLGHPVAEALEKSRDAFIDEMQRCEQLGLSLLNFHPGSHLMQISEEDCLARIAESINIALDKTQGVTAVIENTAGQGSNLGFKFEHLAAIIDGVEDKSRVGVCIDTCHAFAAGYDLRTPAECEKTFADFARIVGFKYLRGMHLNDAKSTFGSRVDRHHSLGEGNIGHDAFRWIMQDDRFDGIPLILETINPDIWAEEIAWLKAQQTEKAVA</sequence>
<proteinExistence type="inferred from homology"/>
<dbReference type="EC" id="3.1.21.2" evidence="1"/>
<dbReference type="EMBL" id="CU928163">
    <property type="protein sequence ID" value="CAR13681.1"/>
    <property type="molecule type" value="Genomic_DNA"/>
</dbReference>
<dbReference type="RefSeq" id="WP_000873880.1">
    <property type="nucleotide sequence ID" value="NC_011751.1"/>
</dbReference>
<dbReference type="RefSeq" id="YP_002413209.1">
    <property type="nucleotide sequence ID" value="NC_011751.1"/>
</dbReference>
<dbReference type="SMR" id="B7N5C2"/>
<dbReference type="STRING" id="585056.ECUMN_2495"/>
<dbReference type="GeneID" id="86947100"/>
<dbReference type="KEGG" id="eum:ECUMN_2495"/>
<dbReference type="PATRIC" id="fig|585056.7.peg.2674"/>
<dbReference type="HOGENOM" id="CLU_025885_0_4_6"/>
<dbReference type="Proteomes" id="UP000007097">
    <property type="component" value="Chromosome"/>
</dbReference>
<dbReference type="GO" id="GO:0008833">
    <property type="term" value="F:deoxyribonuclease IV (phage-T4-induced) activity"/>
    <property type="evidence" value="ECO:0007669"/>
    <property type="project" value="UniProtKB-UniRule"/>
</dbReference>
<dbReference type="GO" id="GO:0003677">
    <property type="term" value="F:DNA binding"/>
    <property type="evidence" value="ECO:0007669"/>
    <property type="project" value="InterPro"/>
</dbReference>
<dbReference type="GO" id="GO:0003906">
    <property type="term" value="F:DNA-(apurinic or apyrimidinic site) endonuclease activity"/>
    <property type="evidence" value="ECO:0007669"/>
    <property type="project" value="TreeGrafter"/>
</dbReference>
<dbReference type="GO" id="GO:0008081">
    <property type="term" value="F:phosphoric diester hydrolase activity"/>
    <property type="evidence" value="ECO:0007669"/>
    <property type="project" value="TreeGrafter"/>
</dbReference>
<dbReference type="GO" id="GO:0008270">
    <property type="term" value="F:zinc ion binding"/>
    <property type="evidence" value="ECO:0007669"/>
    <property type="project" value="UniProtKB-UniRule"/>
</dbReference>
<dbReference type="GO" id="GO:0006284">
    <property type="term" value="P:base-excision repair"/>
    <property type="evidence" value="ECO:0007669"/>
    <property type="project" value="TreeGrafter"/>
</dbReference>
<dbReference type="CDD" id="cd00019">
    <property type="entry name" value="AP2Ec"/>
    <property type="match status" value="1"/>
</dbReference>
<dbReference type="FunFam" id="3.20.20.150:FF:000001">
    <property type="entry name" value="Probable endonuclease 4"/>
    <property type="match status" value="1"/>
</dbReference>
<dbReference type="Gene3D" id="3.20.20.150">
    <property type="entry name" value="Divalent-metal-dependent TIM barrel enzymes"/>
    <property type="match status" value="1"/>
</dbReference>
<dbReference type="HAMAP" id="MF_00152">
    <property type="entry name" value="Nfo"/>
    <property type="match status" value="1"/>
</dbReference>
<dbReference type="InterPro" id="IPR001719">
    <property type="entry name" value="AP_endonuc_2"/>
</dbReference>
<dbReference type="InterPro" id="IPR018246">
    <property type="entry name" value="AP_endonuc_F2_Zn_BS"/>
</dbReference>
<dbReference type="InterPro" id="IPR036237">
    <property type="entry name" value="Xyl_isomerase-like_sf"/>
</dbReference>
<dbReference type="InterPro" id="IPR013022">
    <property type="entry name" value="Xyl_isomerase-like_TIM-brl"/>
</dbReference>
<dbReference type="NCBIfam" id="TIGR00587">
    <property type="entry name" value="nfo"/>
    <property type="match status" value="1"/>
</dbReference>
<dbReference type="NCBIfam" id="NF002199">
    <property type="entry name" value="PRK01060.1-4"/>
    <property type="match status" value="1"/>
</dbReference>
<dbReference type="PANTHER" id="PTHR21445:SF0">
    <property type="entry name" value="APURINIC-APYRIMIDINIC ENDONUCLEASE"/>
    <property type="match status" value="1"/>
</dbReference>
<dbReference type="PANTHER" id="PTHR21445">
    <property type="entry name" value="ENDONUCLEASE IV ENDODEOXYRIBONUCLEASE IV"/>
    <property type="match status" value="1"/>
</dbReference>
<dbReference type="Pfam" id="PF01261">
    <property type="entry name" value="AP_endonuc_2"/>
    <property type="match status" value="1"/>
</dbReference>
<dbReference type="SMART" id="SM00518">
    <property type="entry name" value="AP2Ec"/>
    <property type="match status" value="1"/>
</dbReference>
<dbReference type="SUPFAM" id="SSF51658">
    <property type="entry name" value="Xylose isomerase-like"/>
    <property type="match status" value="1"/>
</dbReference>
<dbReference type="PROSITE" id="PS00729">
    <property type="entry name" value="AP_NUCLEASE_F2_1"/>
    <property type="match status" value="1"/>
</dbReference>
<dbReference type="PROSITE" id="PS00730">
    <property type="entry name" value="AP_NUCLEASE_F2_2"/>
    <property type="match status" value="1"/>
</dbReference>
<dbReference type="PROSITE" id="PS00731">
    <property type="entry name" value="AP_NUCLEASE_F2_3"/>
    <property type="match status" value="1"/>
</dbReference>
<dbReference type="PROSITE" id="PS51432">
    <property type="entry name" value="AP_NUCLEASE_F2_4"/>
    <property type="match status" value="1"/>
</dbReference>